<name>RBSU_LACJO</name>
<sequence length="296" mass="31421">MNGIALLIGLGPLLGWGLFPTIASKIGGKPVNQIIGTTFGTFIFALVYNLVQGIALPSGAALIWSIISGIGWASAQILTFHSFTLVGSSRAMPITTAFQLLGTSLWGVFALGDWPSTSDKLVGFLALALIILGAWMTTWSEHKTDENSAKLRKAVIILLVGEIGYWAYSAAPQAAKIDGSKAFLPQAIGMCLVAICYAVYLKVKEPSQRSALAQGVSYKQIISGFFFAFAALTYLISAQPNMNGLATGFILSQTSVVLATLTGIWFLHEKKTKKEMVVTLIGLAIIIGAATMTVIV</sequence>
<organism>
    <name type="scientific">Lactobacillus johnsonii (strain CNCM I-12250 / La1 / NCC 533)</name>
    <dbReference type="NCBI Taxonomy" id="257314"/>
    <lineage>
        <taxon>Bacteria</taxon>
        <taxon>Bacillati</taxon>
        <taxon>Bacillota</taxon>
        <taxon>Bacilli</taxon>
        <taxon>Lactobacillales</taxon>
        <taxon>Lactobacillaceae</taxon>
        <taxon>Lactobacillus</taxon>
    </lineage>
</organism>
<keyword id="KW-1003">Cell membrane</keyword>
<keyword id="KW-0472">Membrane</keyword>
<keyword id="KW-0762">Sugar transport</keyword>
<keyword id="KW-0812">Transmembrane</keyword>
<keyword id="KW-1133">Transmembrane helix</keyword>
<keyword id="KW-0813">Transport</keyword>
<evidence type="ECO:0000250" key="1"/>
<evidence type="ECO:0000255" key="2"/>
<evidence type="ECO:0000305" key="3"/>
<dbReference type="EMBL" id="AE017198">
    <property type="protein sequence ID" value="AAS09034.1"/>
    <property type="molecule type" value="Genomic_DNA"/>
</dbReference>
<dbReference type="RefSeq" id="WP_011162042.1">
    <property type="nucleotide sequence ID" value="NC_005362.1"/>
</dbReference>
<dbReference type="SMR" id="P60949"/>
<dbReference type="KEGG" id="ljo:LJ_1213"/>
<dbReference type="eggNOG" id="COG4975">
    <property type="taxonomic scope" value="Bacteria"/>
</dbReference>
<dbReference type="HOGENOM" id="CLU_076024_0_1_9"/>
<dbReference type="Proteomes" id="UP000000581">
    <property type="component" value="Chromosome"/>
</dbReference>
<dbReference type="GO" id="GO:0005886">
    <property type="term" value="C:plasma membrane"/>
    <property type="evidence" value="ECO:0007669"/>
    <property type="project" value="UniProtKB-SubCell"/>
</dbReference>
<dbReference type="GO" id="GO:0015144">
    <property type="term" value="F:carbohydrate transmembrane transporter activity"/>
    <property type="evidence" value="ECO:0007669"/>
    <property type="project" value="InterPro"/>
</dbReference>
<dbReference type="CDD" id="cd23111">
    <property type="entry name" value="ribose_uptake_RbsU"/>
    <property type="match status" value="1"/>
</dbReference>
<dbReference type="InterPro" id="IPR010651">
    <property type="entry name" value="Sugar_transport"/>
</dbReference>
<dbReference type="NCBIfam" id="NF047342">
    <property type="entry name" value="symport_RbsU"/>
    <property type="match status" value="1"/>
</dbReference>
<dbReference type="PANTHER" id="PTHR16119">
    <property type="entry name" value="TRANSMEMBRANE PROTEIN 144"/>
    <property type="match status" value="1"/>
</dbReference>
<dbReference type="PANTHER" id="PTHR16119:SF17">
    <property type="entry name" value="TRANSMEMBRANE PROTEIN 144"/>
    <property type="match status" value="1"/>
</dbReference>
<dbReference type="Pfam" id="PF06800">
    <property type="entry name" value="Sugar_transport"/>
    <property type="match status" value="1"/>
</dbReference>
<dbReference type="SUPFAM" id="SSF103481">
    <property type="entry name" value="Multidrug resistance efflux transporter EmrE"/>
    <property type="match status" value="1"/>
</dbReference>
<feature type="chain" id="PRO_0000213634" description="Putative ribose uptake protein RbsU">
    <location>
        <begin position="1"/>
        <end position="296"/>
    </location>
</feature>
<feature type="transmembrane region" description="Helical" evidence="2">
    <location>
        <begin position="2"/>
        <end position="24"/>
    </location>
</feature>
<feature type="transmembrane region" description="Helical" evidence="2">
    <location>
        <begin position="34"/>
        <end position="51"/>
    </location>
</feature>
<feature type="transmembrane region" description="Helical" evidence="2">
    <location>
        <begin position="58"/>
        <end position="80"/>
    </location>
</feature>
<feature type="transmembrane region" description="Helical" evidence="2">
    <location>
        <begin position="90"/>
        <end position="112"/>
    </location>
</feature>
<feature type="transmembrane region" description="Helical" evidence="2">
    <location>
        <begin position="121"/>
        <end position="139"/>
    </location>
</feature>
<feature type="transmembrane region" description="Helical" evidence="2">
    <location>
        <begin position="182"/>
        <end position="201"/>
    </location>
</feature>
<feature type="transmembrane region" description="Helical" evidence="2">
    <location>
        <begin position="221"/>
        <end position="240"/>
    </location>
</feature>
<feature type="transmembrane region" description="Helical" evidence="2">
    <location>
        <begin position="245"/>
        <end position="267"/>
    </location>
</feature>
<feature type="transmembrane region" description="Helical" evidence="2">
    <location>
        <begin position="276"/>
        <end position="295"/>
    </location>
</feature>
<reference key="1">
    <citation type="journal article" date="2004" name="Proc. Natl. Acad. Sci. U.S.A.">
        <title>The genome sequence of the probiotic intestinal bacterium Lactobacillus johnsonii NCC 533.</title>
        <authorList>
            <person name="Pridmore R.D."/>
            <person name="Berger B."/>
            <person name="Desiere F."/>
            <person name="Vilanova D."/>
            <person name="Barretto C."/>
            <person name="Pittet A.-C."/>
            <person name="Zwahlen M.-C."/>
            <person name="Rouvet M."/>
            <person name="Altermann E."/>
            <person name="Barrangou R."/>
            <person name="Mollet B."/>
            <person name="Mercenier A."/>
            <person name="Klaenhammer T."/>
            <person name="Arigoni F."/>
            <person name="Schell M.A."/>
        </authorList>
    </citation>
    <scope>NUCLEOTIDE SEQUENCE [LARGE SCALE GENOMIC DNA]</scope>
    <source>
        <strain>CNCM I-1225 / La1 / NCC 533</strain>
    </source>
</reference>
<comment type="function">
    <text evidence="1">Could be involved in the uptake of ribose.</text>
</comment>
<comment type="subcellular location">
    <subcellularLocation>
        <location evidence="3">Cell membrane</location>
        <topology evidence="3">Multi-pass membrane protein</topology>
    </subcellularLocation>
</comment>
<comment type="similarity">
    <text evidence="3">Belongs to the GRP transporter (TC 2.A.7.5) family.</text>
</comment>
<accession>P60949</accession>
<protein>
    <recommendedName>
        <fullName>Putative ribose uptake protein RbsU</fullName>
    </recommendedName>
</protein>
<proteinExistence type="inferred from homology"/>
<gene>
    <name type="primary">rbsU</name>
    <name type="ordered locus">LJ_1213</name>
</gene>